<name>PURL_NITHX</name>
<sequence length="744" mass="79492">MNRTDPPITPELVASHGLKPDEYERILKLIGRVPTFTELGIFSAMWNEHCSYKSSRIHLRGLPTKAPWVIQGPGENAGVIDIGDGQAVVFKMESHNHPSYIEPYQGATTGVGGILRDVFTMGARPIACLNALSFGDPSHPKTRHLVGGVVAGVGGYGNSFGVPTVGGQVRFHTRYDGNILVNAMAVGLADADKIFYAAASGVNMPIVYLGSKTGRDGIHGATMASAEFDDDSAEKRPTVQVGDPFAEKLLLEACLEIMETDCVIAIQDMGAAGLTCSAVEMGAKGDLGVDLDLDSVPTREQGMSAYEMMLSESQERMLMVLKPEKEKEAEAIFRKWGLDFAIVGYTTPSQRFVVKHGGDVMVDLPIKELESEAPLYDRPHVPSPQLPVVHARDVAPRLPVADALEKLIATPELCSKRWVWEQYDHVIGGNTVQRPGGDAAVVRVEDGPKGLALTVDVTPRYCEADPFEGGKQAVAEAWRNITAVGGRPLAITDNLNFGNPERPEIMGQFVGCLKGIAAACTALDFPVVSGNVSLYNETNGRGILPTPSIGGVGLLDDFTQSASLAFKAEGECILLIGETQGWLGQSVYLRDVCGREEGAPPPVDLAAEKRNGDVVRGMIHAGTVTAVHDISDGGLLVALAEMAMAGGIGAALDAAPEAIVPHAWWFGEDQARYIVTVHEKDLLSVFTKLKAVEVPCVQIGLTGGHEIAIAGERAVHVKALQHGFESWLPDYMAGRVETSGIPDR</sequence>
<protein>
    <recommendedName>
        <fullName evidence="1">Phosphoribosylformylglycinamidine synthase subunit PurL</fullName>
        <shortName evidence="1">FGAM synthase</shortName>
        <ecNumber evidence="1">6.3.5.3</ecNumber>
    </recommendedName>
    <alternativeName>
        <fullName evidence="1">Formylglycinamide ribonucleotide amidotransferase subunit II</fullName>
        <shortName evidence="1">FGAR amidotransferase II</shortName>
        <shortName evidence="1">FGAR-AT II</shortName>
    </alternativeName>
    <alternativeName>
        <fullName evidence="1">Glutamine amidotransferase PurL</fullName>
    </alternativeName>
    <alternativeName>
        <fullName evidence="1">Phosphoribosylformylglycinamidine synthase subunit II</fullName>
    </alternativeName>
</protein>
<organism>
    <name type="scientific">Nitrobacter hamburgensis (strain DSM 10229 / NCIMB 13809 / X14)</name>
    <dbReference type="NCBI Taxonomy" id="323097"/>
    <lineage>
        <taxon>Bacteria</taxon>
        <taxon>Pseudomonadati</taxon>
        <taxon>Pseudomonadota</taxon>
        <taxon>Alphaproteobacteria</taxon>
        <taxon>Hyphomicrobiales</taxon>
        <taxon>Nitrobacteraceae</taxon>
        <taxon>Nitrobacter</taxon>
    </lineage>
</organism>
<gene>
    <name evidence="1" type="primary">purL</name>
    <name type="ordered locus">Nham_1636</name>
</gene>
<feature type="chain" id="PRO_1000050327" description="Phosphoribosylformylglycinamidine synthase subunit PurL">
    <location>
        <begin position="1"/>
        <end position="744"/>
    </location>
</feature>
<feature type="active site" evidence="1">
    <location>
        <position position="49"/>
    </location>
</feature>
<feature type="active site" description="Proton acceptor" evidence="1">
    <location>
        <position position="95"/>
    </location>
</feature>
<feature type="binding site" evidence="1">
    <location>
        <position position="52"/>
    </location>
    <ligand>
        <name>ATP</name>
        <dbReference type="ChEBI" id="CHEBI:30616"/>
    </ligand>
</feature>
<feature type="binding site" evidence="1">
    <location>
        <position position="91"/>
    </location>
    <ligand>
        <name>ATP</name>
        <dbReference type="ChEBI" id="CHEBI:30616"/>
    </ligand>
</feature>
<feature type="binding site" evidence="1">
    <location>
        <position position="93"/>
    </location>
    <ligand>
        <name>Mg(2+)</name>
        <dbReference type="ChEBI" id="CHEBI:18420"/>
        <label>1</label>
    </ligand>
</feature>
<feature type="binding site" evidence="1">
    <location>
        <begin position="94"/>
        <end position="97"/>
    </location>
    <ligand>
        <name>substrate</name>
    </ligand>
</feature>
<feature type="binding site" evidence="1">
    <location>
        <position position="116"/>
    </location>
    <ligand>
        <name>substrate</name>
    </ligand>
</feature>
<feature type="binding site" evidence="1">
    <location>
        <position position="117"/>
    </location>
    <ligand>
        <name>Mg(2+)</name>
        <dbReference type="ChEBI" id="CHEBI:18420"/>
        <label>2</label>
    </ligand>
</feature>
<feature type="binding site" evidence="1">
    <location>
        <position position="240"/>
    </location>
    <ligand>
        <name>substrate</name>
    </ligand>
</feature>
<feature type="binding site" evidence="1">
    <location>
        <position position="268"/>
    </location>
    <ligand>
        <name>Mg(2+)</name>
        <dbReference type="ChEBI" id="CHEBI:18420"/>
        <label>2</label>
    </ligand>
</feature>
<feature type="binding site" evidence="1">
    <location>
        <begin position="312"/>
        <end position="314"/>
    </location>
    <ligand>
        <name>substrate</name>
    </ligand>
</feature>
<feature type="binding site" evidence="1">
    <location>
        <position position="493"/>
    </location>
    <ligand>
        <name>ATP</name>
        <dbReference type="ChEBI" id="CHEBI:30616"/>
    </ligand>
</feature>
<feature type="binding site" evidence="1">
    <location>
        <position position="530"/>
    </location>
    <ligand>
        <name>ATP</name>
        <dbReference type="ChEBI" id="CHEBI:30616"/>
    </ligand>
</feature>
<feature type="binding site" evidence="1">
    <location>
        <position position="531"/>
    </location>
    <ligand>
        <name>Mg(2+)</name>
        <dbReference type="ChEBI" id="CHEBI:18420"/>
        <label>1</label>
    </ligand>
</feature>
<feature type="binding site" evidence="1">
    <location>
        <position position="533"/>
    </location>
    <ligand>
        <name>substrate</name>
    </ligand>
</feature>
<keyword id="KW-0067">ATP-binding</keyword>
<keyword id="KW-0963">Cytoplasm</keyword>
<keyword id="KW-0436">Ligase</keyword>
<keyword id="KW-0460">Magnesium</keyword>
<keyword id="KW-0479">Metal-binding</keyword>
<keyword id="KW-0547">Nucleotide-binding</keyword>
<keyword id="KW-0658">Purine biosynthesis</keyword>
<keyword id="KW-1185">Reference proteome</keyword>
<dbReference type="EC" id="6.3.5.3" evidence="1"/>
<dbReference type="EMBL" id="CP000319">
    <property type="protein sequence ID" value="ABE62455.1"/>
    <property type="molecule type" value="Genomic_DNA"/>
</dbReference>
<dbReference type="RefSeq" id="WP_011510138.1">
    <property type="nucleotide sequence ID" value="NC_007964.1"/>
</dbReference>
<dbReference type="SMR" id="Q1QMU2"/>
<dbReference type="STRING" id="323097.Nham_1636"/>
<dbReference type="KEGG" id="nha:Nham_1636"/>
<dbReference type="eggNOG" id="COG0046">
    <property type="taxonomic scope" value="Bacteria"/>
</dbReference>
<dbReference type="HOGENOM" id="CLU_003100_0_1_5"/>
<dbReference type="OrthoDB" id="9804441at2"/>
<dbReference type="UniPathway" id="UPA00074">
    <property type="reaction ID" value="UER00128"/>
</dbReference>
<dbReference type="Proteomes" id="UP000001953">
    <property type="component" value="Chromosome"/>
</dbReference>
<dbReference type="GO" id="GO:0005737">
    <property type="term" value="C:cytoplasm"/>
    <property type="evidence" value="ECO:0007669"/>
    <property type="project" value="UniProtKB-SubCell"/>
</dbReference>
<dbReference type="GO" id="GO:0005524">
    <property type="term" value="F:ATP binding"/>
    <property type="evidence" value="ECO:0007669"/>
    <property type="project" value="UniProtKB-UniRule"/>
</dbReference>
<dbReference type="GO" id="GO:0000287">
    <property type="term" value="F:magnesium ion binding"/>
    <property type="evidence" value="ECO:0007669"/>
    <property type="project" value="UniProtKB-UniRule"/>
</dbReference>
<dbReference type="GO" id="GO:0004642">
    <property type="term" value="F:phosphoribosylformylglycinamidine synthase activity"/>
    <property type="evidence" value="ECO:0007669"/>
    <property type="project" value="UniProtKB-UniRule"/>
</dbReference>
<dbReference type="GO" id="GO:0006189">
    <property type="term" value="P:'de novo' IMP biosynthetic process"/>
    <property type="evidence" value="ECO:0007669"/>
    <property type="project" value="UniProtKB-UniRule"/>
</dbReference>
<dbReference type="CDD" id="cd02203">
    <property type="entry name" value="PurL_repeat1"/>
    <property type="match status" value="1"/>
</dbReference>
<dbReference type="CDD" id="cd02204">
    <property type="entry name" value="PurL_repeat2"/>
    <property type="match status" value="1"/>
</dbReference>
<dbReference type="FunFam" id="3.30.1330.10:FF:000004">
    <property type="entry name" value="Phosphoribosylformylglycinamidine synthase subunit PurL"/>
    <property type="match status" value="1"/>
</dbReference>
<dbReference type="Gene3D" id="3.90.650.10">
    <property type="entry name" value="PurM-like C-terminal domain"/>
    <property type="match status" value="2"/>
</dbReference>
<dbReference type="Gene3D" id="3.30.1330.10">
    <property type="entry name" value="PurM-like, N-terminal domain"/>
    <property type="match status" value="2"/>
</dbReference>
<dbReference type="HAMAP" id="MF_00420">
    <property type="entry name" value="PurL_2"/>
    <property type="match status" value="1"/>
</dbReference>
<dbReference type="InterPro" id="IPR010074">
    <property type="entry name" value="PRibForGlyAmidine_synth_PurL"/>
</dbReference>
<dbReference type="InterPro" id="IPR041609">
    <property type="entry name" value="PurL_linker"/>
</dbReference>
<dbReference type="InterPro" id="IPR010918">
    <property type="entry name" value="PurM-like_C_dom"/>
</dbReference>
<dbReference type="InterPro" id="IPR036676">
    <property type="entry name" value="PurM-like_C_sf"/>
</dbReference>
<dbReference type="InterPro" id="IPR016188">
    <property type="entry name" value="PurM-like_N"/>
</dbReference>
<dbReference type="InterPro" id="IPR036921">
    <property type="entry name" value="PurM-like_N_sf"/>
</dbReference>
<dbReference type="NCBIfam" id="TIGR01736">
    <property type="entry name" value="FGAM_synth_II"/>
    <property type="match status" value="1"/>
</dbReference>
<dbReference type="NCBIfam" id="NF002290">
    <property type="entry name" value="PRK01213.1"/>
    <property type="match status" value="1"/>
</dbReference>
<dbReference type="PANTHER" id="PTHR43555">
    <property type="entry name" value="PHOSPHORIBOSYLFORMYLGLYCINAMIDINE SYNTHASE SUBUNIT PURL"/>
    <property type="match status" value="1"/>
</dbReference>
<dbReference type="PANTHER" id="PTHR43555:SF1">
    <property type="entry name" value="PHOSPHORIBOSYLFORMYLGLYCINAMIDINE SYNTHASE SUBUNIT PURL"/>
    <property type="match status" value="1"/>
</dbReference>
<dbReference type="Pfam" id="PF00586">
    <property type="entry name" value="AIRS"/>
    <property type="match status" value="2"/>
</dbReference>
<dbReference type="Pfam" id="PF02769">
    <property type="entry name" value="AIRS_C"/>
    <property type="match status" value="2"/>
</dbReference>
<dbReference type="Pfam" id="PF18072">
    <property type="entry name" value="FGAR-AT_linker"/>
    <property type="match status" value="1"/>
</dbReference>
<dbReference type="PIRSF" id="PIRSF001587">
    <property type="entry name" value="FGAM_synthase_II"/>
    <property type="match status" value="1"/>
</dbReference>
<dbReference type="SUPFAM" id="SSF56042">
    <property type="entry name" value="PurM C-terminal domain-like"/>
    <property type="match status" value="2"/>
</dbReference>
<dbReference type="SUPFAM" id="SSF55326">
    <property type="entry name" value="PurM N-terminal domain-like"/>
    <property type="match status" value="2"/>
</dbReference>
<evidence type="ECO:0000255" key="1">
    <source>
        <dbReference type="HAMAP-Rule" id="MF_00420"/>
    </source>
</evidence>
<proteinExistence type="inferred from homology"/>
<reference key="1">
    <citation type="submission" date="2006-03" db="EMBL/GenBank/DDBJ databases">
        <title>Complete sequence of chromosome of Nitrobacter hamburgensis X14.</title>
        <authorList>
            <consortium name="US DOE Joint Genome Institute"/>
            <person name="Copeland A."/>
            <person name="Lucas S."/>
            <person name="Lapidus A."/>
            <person name="Barry K."/>
            <person name="Detter J.C."/>
            <person name="Glavina del Rio T."/>
            <person name="Hammon N."/>
            <person name="Israni S."/>
            <person name="Dalin E."/>
            <person name="Tice H."/>
            <person name="Pitluck S."/>
            <person name="Chain P."/>
            <person name="Malfatti S."/>
            <person name="Shin M."/>
            <person name="Vergez L."/>
            <person name="Schmutz J."/>
            <person name="Larimer F."/>
            <person name="Land M."/>
            <person name="Hauser L."/>
            <person name="Kyrpides N."/>
            <person name="Ivanova N."/>
            <person name="Ward B."/>
            <person name="Arp D."/>
            <person name="Klotz M."/>
            <person name="Stein L."/>
            <person name="O'Mullan G."/>
            <person name="Starkenburg S."/>
            <person name="Sayavedra L."/>
            <person name="Poret-Peterson A.T."/>
            <person name="Gentry M.E."/>
            <person name="Bruce D."/>
            <person name="Richardson P."/>
        </authorList>
    </citation>
    <scope>NUCLEOTIDE SEQUENCE [LARGE SCALE GENOMIC DNA]</scope>
    <source>
        <strain>DSM 10229 / NCIMB 13809 / X14</strain>
    </source>
</reference>
<accession>Q1QMU2</accession>
<comment type="function">
    <text evidence="1">Part of the phosphoribosylformylglycinamidine synthase complex involved in the purines biosynthetic pathway. Catalyzes the ATP-dependent conversion of formylglycinamide ribonucleotide (FGAR) and glutamine to yield formylglycinamidine ribonucleotide (FGAM) and glutamate. The FGAM synthase complex is composed of three subunits. PurQ produces an ammonia molecule by converting glutamine to glutamate. PurL transfers the ammonia molecule to FGAR to form FGAM in an ATP-dependent manner. PurS interacts with PurQ and PurL and is thought to assist in the transfer of the ammonia molecule from PurQ to PurL.</text>
</comment>
<comment type="catalytic activity">
    <reaction evidence="1">
        <text>N(2)-formyl-N(1)-(5-phospho-beta-D-ribosyl)glycinamide + L-glutamine + ATP + H2O = 2-formamido-N(1)-(5-O-phospho-beta-D-ribosyl)acetamidine + L-glutamate + ADP + phosphate + H(+)</text>
        <dbReference type="Rhea" id="RHEA:17129"/>
        <dbReference type="ChEBI" id="CHEBI:15377"/>
        <dbReference type="ChEBI" id="CHEBI:15378"/>
        <dbReference type="ChEBI" id="CHEBI:29985"/>
        <dbReference type="ChEBI" id="CHEBI:30616"/>
        <dbReference type="ChEBI" id="CHEBI:43474"/>
        <dbReference type="ChEBI" id="CHEBI:58359"/>
        <dbReference type="ChEBI" id="CHEBI:147286"/>
        <dbReference type="ChEBI" id="CHEBI:147287"/>
        <dbReference type="ChEBI" id="CHEBI:456216"/>
        <dbReference type="EC" id="6.3.5.3"/>
    </reaction>
</comment>
<comment type="pathway">
    <text evidence="1">Purine metabolism; IMP biosynthesis via de novo pathway; 5-amino-1-(5-phospho-D-ribosyl)imidazole from N(2)-formyl-N(1)-(5-phospho-D-ribosyl)glycinamide: step 1/2.</text>
</comment>
<comment type="subunit">
    <text evidence="1">Monomer. Part of the FGAM synthase complex composed of 1 PurL, 1 PurQ and 2 PurS subunits.</text>
</comment>
<comment type="subcellular location">
    <subcellularLocation>
        <location evidence="1">Cytoplasm</location>
    </subcellularLocation>
</comment>
<comment type="similarity">
    <text evidence="1">Belongs to the FGAMS family.</text>
</comment>